<name>SEQA_VIBCH</name>
<proteinExistence type="inferred from homology"/>
<accession>Q9KQA4</accession>
<evidence type="ECO:0000255" key="1">
    <source>
        <dbReference type="HAMAP-Rule" id="MF_00908"/>
    </source>
</evidence>
<keyword id="KW-0963">Cytoplasm</keyword>
<keyword id="KW-0236">DNA replication inhibitor</keyword>
<keyword id="KW-0238">DNA-binding</keyword>
<keyword id="KW-1185">Reference proteome</keyword>
<comment type="function">
    <text evidence="1">Negative regulator of replication initiation, which contributes to regulation of DNA replication and ensures that replication initiation occurs exactly once per chromosome per cell cycle. Binds to pairs of hemimethylated GATC sequences in the oriC region, thus preventing assembly of replication proteins and re-initiation at newly replicated origins. Repression is relieved when the region becomes fully methylated.</text>
</comment>
<comment type="subunit">
    <text evidence="1">Homodimer. Polymerizes to form helical filaments.</text>
</comment>
<comment type="subcellular location">
    <subcellularLocation>
        <location evidence="1">Cytoplasm</location>
    </subcellularLocation>
</comment>
<comment type="similarity">
    <text evidence="1">Belongs to the SeqA family.</text>
</comment>
<protein>
    <recommendedName>
        <fullName evidence="1">Negative modulator of initiation of replication</fullName>
    </recommendedName>
</protein>
<organism>
    <name type="scientific">Vibrio cholerae serotype O1 (strain ATCC 39315 / El Tor Inaba N16961)</name>
    <dbReference type="NCBI Taxonomy" id="243277"/>
    <lineage>
        <taxon>Bacteria</taxon>
        <taxon>Pseudomonadati</taxon>
        <taxon>Pseudomonadota</taxon>
        <taxon>Gammaproteobacteria</taxon>
        <taxon>Vibrionales</taxon>
        <taxon>Vibrionaceae</taxon>
        <taxon>Vibrio</taxon>
    </lineage>
</organism>
<dbReference type="EMBL" id="AE003852">
    <property type="protein sequence ID" value="AAF95242.1"/>
    <property type="molecule type" value="Genomic_DNA"/>
</dbReference>
<dbReference type="PIR" id="F82119">
    <property type="entry name" value="F82119"/>
</dbReference>
<dbReference type="RefSeq" id="NP_231728.1">
    <property type="nucleotide sequence ID" value="NC_002505.1"/>
</dbReference>
<dbReference type="RefSeq" id="WP_000848401.1">
    <property type="nucleotide sequence ID" value="NZ_LT906614.1"/>
</dbReference>
<dbReference type="SMR" id="Q9KQA4"/>
<dbReference type="STRING" id="243277.VC_2096"/>
<dbReference type="DNASU" id="2613352"/>
<dbReference type="EnsemblBacteria" id="AAF95242">
    <property type="protein sequence ID" value="AAF95242"/>
    <property type="gene ID" value="VC_2096"/>
</dbReference>
<dbReference type="KEGG" id="vch:VC_2096"/>
<dbReference type="PATRIC" id="fig|243277.26.peg.2003"/>
<dbReference type="eggNOG" id="COG3057">
    <property type="taxonomic scope" value="Bacteria"/>
</dbReference>
<dbReference type="HOGENOM" id="CLU_099733_0_0_6"/>
<dbReference type="Proteomes" id="UP000000584">
    <property type="component" value="Chromosome 1"/>
</dbReference>
<dbReference type="GO" id="GO:0005737">
    <property type="term" value="C:cytoplasm"/>
    <property type="evidence" value="ECO:0007669"/>
    <property type="project" value="UniProtKB-SubCell"/>
</dbReference>
<dbReference type="GO" id="GO:0003677">
    <property type="term" value="F:DNA binding"/>
    <property type="evidence" value="ECO:0007669"/>
    <property type="project" value="UniProtKB-UniRule"/>
</dbReference>
<dbReference type="GO" id="GO:0032297">
    <property type="term" value="P:negative regulation of DNA-templated DNA replication initiation"/>
    <property type="evidence" value="ECO:0007669"/>
    <property type="project" value="UniProtKB-UniRule"/>
</dbReference>
<dbReference type="GO" id="GO:0006355">
    <property type="term" value="P:regulation of DNA-templated transcription"/>
    <property type="evidence" value="ECO:0007669"/>
    <property type="project" value="InterPro"/>
</dbReference>
<dbReference type="Gene3D" id="1.10.1220.10">
    <property type="entry name" value="Met repressor-like"/>
    <property type="match status" value="1"/>
</dbReference>
<dbReference type="Gene3D" id="1.20.1380.10">
    <property type="entry name" value="Replication modulator SeqA, C-terminal DNA-binding domain"/>
    <property type="match status" value="1"/>
</dbReference>
<dbReference type="HAMAP" id="MF_00908">
    <property type="entry name" value="SeqA"/>
    <property type="match status" value="1"/>
</dbReference>
<dbReference type="InterPro" id="IPR013321">
    <property type="entry name" value="Arc_rbn_hlx_hlx"/>
</dbReference>
<dbReference type="InterPro" id="IPR010985">
    <property type="entry name" value="Ribbon_hlx_hlx"/>
</dbReference>
<dbReference type="InterPro" id="IPR005621">
    <property type="entry name" value="SeqA"/>
</dbReference>
<dbReference type="InterPro" id="IPR026577">
    <property type="entry name" value="SeqA_DNA-bd_C"/>
</dbReference>
<dbReference type="InterPro" id="IPR036835">
    <property type="entry name" value="SeqA_DNA-bd_C_sf"/>
</dbReference>
<dbReference type="InterPro" id="IPR033761">
    <property type="entry name" value="SeqA_N"/>
</dbReference>
<dbReference type="NCBIfam" id="NF008389">
    <property type="entry name" value="PRK11187.1"/>
    <property type="match status" value="1"/>
</dbReference>
<dbReference type="Pfam" id="PF03925">
    <property type="entry name" value="SeqA"/>
    <property type="match status" value="1"/>
</dbReference>
<dbReference type="Pfam" id="PF17206">
    <property type="entry name" value="SeqA_N"/>
    <property type="match status" value="1"/>
</dbReference>
<dbReference type="PIRSF" id="PIRSF019401">
    <property type="entry name" value="SeqA"/>
    <property type="match status" value="1"/>
</dbReference>
<dbReference type="SUPFAM" id="SSF82808">
    <property type="entry name" value="Replication modulator SeqA, C-terminal DNA-binding domain"/>
    <property type="match status" value="1"/>
</dbReference>
<dbReference type="SUPFAM" id="SSF47598">
    <property type="entry name" value="Ribbon-helix-helix"/>
    <property type="match status" value="1"/>
</dbReference>
<reference key="1">
    <citation type="journal article" date="2000" name="Nature">
        <title>DNA sequence of both chromosomes of the cholera pathogen Vibrio cholerae.</title>
        <authorList>
            <person name="Heidelberg J.F."/>
            <person name="Eisen J.A."/>
            <person name="Nelson W.C."/>
            <person name="Clayton R.A."/>
            <person name="Gwinn M.L."/>
            <person name="Dodson R.J."/>
            <person name="Haft D.H."/>
            <person name="Hickey E.K."/>
            <person name="Peterson J.D."/>
            <person name="Umayam L.A."/>
            <person name="Gill S.R."/>
            <person name="Nelson K.E."/>
            <person name="Read T.D."/>
            <person name="Tettelin H."/>
            <person name="Richardson D.L."/>
            <person name="Ermolaeva M.D."/>
            <person name="Vamathevan J.J."/>
            <person name="Bass S."/>
            <person name="Qin H."/>
            <person name="Dragoi I."/>
            <person name="Sellers P."/>
            <person name="McDonald L.A."/>
            <person name="Utterback T.R."/>
            <person name="Fleischmann R.D."/>
            <person name="Nierman W.C."/>
            <person name="White O."/>
            <person name="Salzberg S.L."/>
            <person name="Smith H.O."/>
            <person name="Colwell R.R."/>
            <person name="Mekalanos J.J."/>
            <person name="Venter J.C."/>
            <person name="Fraser C.M."/>
        </authorList>
    </citation>
    <scope>NUCLEOTIDE SEQUENCE [LARGE SCALE GENOMIC DNA]</scope>
    <source>
        <strain>ATCC 39315 / El Tor Inaba N16961</strain>
    </source>
</reference>
<feature type="chain" id="PRO_0000413943" description="Negative modulator of initiation of replication">
    <location>
        <begin position="1"/>
        <end position="177"/>
    </location>
</feature>
<gene>
    <name evidence="1" type="primary">seqA</name>
    <name type="ordered locus">VC_2096</name>
</gene>
<sequence>MKTIEVDEDLYRYIASQTLHIGESASDILRRLLNVDGELATAAPAAEPKGIVVSKDAAFDTKIDGVKAMRSLLISDEFAGLKNAIDRFMLILSTLHRIDSASFSEATMFKGRKRVYFADNEQTLLASGQTTKPKAIPNTPFWVITNNNTSRKQQMVEQVMVRMGFPSDIIEKVTHSI</sequence>